<organism>
    <name type="scientific">Variola virus (isolate Human/India/Ind3/1967)</name>
    <name type="common">VARV</name>
    <name type="synonym">Smallpox virus</name>
    <dbReference type="NCBI Taxonomy" id="587200"/>
    <lineage>
        <taxon>Viruses</taxon>
        <taxon>Varidnaviria</taxon>
        <taxon>Bamfordvirae</taxon>
        <taxon>Nucleocytoviricota</taxon>
        <taxon>Pokkesviricetes</taxon>
        <taxon>Chitovirales</taxon>
        <taxon>Poxviridae</taxon>
        <taxon>Chordopoxvirinae</taxon>
        <taxon>Orthopoxvirus</taxon>
        <taxon>Variola virus</taxon>
    </lineage>
</organism>
<feature type="chain" id="PRO_0000210125" description="mRNA-capping enzyme catalytic subunit">
    <location>
        <begin position="1"/>
        <end position="844"/>
    </location>
</feature>
<feature type="domain" description="mRNA cap 0 methyltransferase" evidence="3">
    <location>
        <begin position="560"/>
        <end position="844"/>
    </location>
</feature>
<feature type="region of interest" description="Triphosphatase-guanylyltransferase" evidence="1">
    <location>
        <begin position="1"/>
        <end position="539"/>
    </location>
</feature>
<feature type="active site" description="N6-GMP-lysine intermediate" evidence="1">
    <location>
        <position position="260"/>
    </location>
</feature>
<feature type="binding site" evidence="2">
    <location>
        <position position="37"/>
    </location>
    <ligand>
        <name>Mg(2+)</name>
        <dbReference type="ChEBI" id="CHEBI:18420"/>
        <note>catalytic; for RNA triphosphatase activity</note>
    </ligand>
</feature>
<feature type="binding site" evidence="2">
    <location>
        <position position="39"/>
    </location>
    <ligand>
        <name>Mg(2+)</name>
        <dbReference type="ChEBI" id="CHEBI:18420"/>
        <note>catalytic; for RNA triphosphatase activity</note>
    </ligand>
</feature>
<feature type="binding site" evidence="2">
    <location>
        <position position="192"/>
    </location>
    <ligand>
        <name>Mg(2+)</name>
        <dbReference type="ChEBI" id="CHEBI:18420"/>
        <note>catalytic; for RNA triphosphatase activity</note>
    </ligand>
</feature>
<feature type="binding site" evidence="2">
    <location>
        <position position="194"/>
    </location>
    <ligand>
        <name>Mg(2+)</name>
        <dbReference type="ChEBI" id="CHEBI:18420"/>
        <note>catalytic; for RNA triphosphatase activity</note>
    </ligand>
</feature>
<feature type="binding site" evidence="3">
    <location>
        <begin position="549"/>
        <end position="550"/>
    </location>
    <ligand>
        <name>S-adenosyl-L-methionine</name>
        <dbReference type="ChEBI" id="CHEBI:59789"/>
    </ligand>
</feature>
<feature type="binding site" evidence="3">
    <location>
        <begin position="569"/>
        <end position="570"/>
    </location>
    <ligand>
        <name>mRNA</name>
        <dbReference type="ChEBI" id="CHEBI:33699"/>
    </ligand>
    <ligandPart>
        <name>mRNA cap</name>
    </ligandPart>
</feature>
<feature type="binding site" evidence="3">
    <location>
        <position position="573"/>
    </location>
    <ligand>
        <name>S-adenosyl-L-methionine</name>
        <dbReference type="ChEBI" id="CHEBI:59789"/>
    </ligand>
</feature>
<feature type="binding site" evidence="3">
    <location>
        <position position="598"/>
    </location>
    <ligand>
        <name>S-adenosyl-L-methionine</name>
        <dbReference type="ChEBI" id="CHEBI:59789"/>
    </ligand>
</feature>
<feature type="binding site" evidence="3">
    <location>
        <position position="620"/>
    </location>
    <ligand>
        <name>S-adenosyl-L-methionine</name>
        <dbReference type="ChEBI" id="CHEBI:59789"/>
    </ligand>
</feature>
<feature type="binding site" evidence="3">
    <location>
        <begin position="678"/>
        <end position="680"/>
    </location>
    <ligand>
        <name>S-adenosyl-L-methionine</name>
        <dbReference type="ChEBI" id="CHEBI:59789"/>
    </ligand>
</feature>
<feature type="site" description="Essential for RNA triphosphatase activity" evidence="1">
    <location>
        <position position="77"/>
    </location>
</feature>
<feature type="site" description="Essential for RNA triphosphatase activity" evidence="1">
    <location>
        <position position="107"/>
    </location>
</feature>
<feature type="site" description="Essential for RNA triphosphatase activity" evidence="1">
    <location>
        <position position="126"/>
    </location>
</feature>
<feature type="site" description="Essential for RNA triphosphatase activity" evidence="1">
    <location>
        <position position="159"/>
    </location>
</feature>
<feature type="site" description="Essential for RNA triphosphatase activity" evidence="1">
    <location>
        <position position="161"/>
    </location>
</feature>
<feature type="site" description="mRNA cap binding" evidence="3">
    <location>
        <position position="607"/>
    </location>
</feature>
<feature type="site" description="mRNA cap binding" evidence="3">
    <location>
        <position position="632"/>
    </location>
</feature>
<feature type="site" description="mRNA cap binding" evidence="3">
    <location>
        <position position="682"/>
    </location>
</feature>
<feature type="site" description="mRNA cap binding" evidence="3">
    <location>
        <position position="763"/>
    </location>
</feature>
<feature type="site" description="mRNA cap binding" evidence="3">
    <location>
        <position position="836"/>
    </location>
</feature>
<evidence type="ECO:0000250" key="1"/>
<evidence type="ECO:0000250" key="2">
    <source>
        <dbReference type="UniProtKB" id="P04298"/>
    </source>
</evidence>
<evidence type="ECO:0000255" key="3">
    <source>
        <dbReference type="PROSITE-ProRule" id="PRU00895"/>
    </source>
</evidence>
<evidence type="ECO:0000305" key="4"/>
<reference key="1">
    <citation type="journal article" date="1993" name="Virus Res.">
        <title>Nucleotide sequence analysis of variola virus HindIII M, L, I genome fragments.</title>
        <authorList>
            <person name="Shchelkunov S.N."/>
            <person name="Blinov V.M."/>
            <person name="Totmenin A.V."/>
            <person name="Marennikova S.S."/>
            <person name="Kolykhalov A.A."/>
            <person name="Frolov I.V."/>
            <person name="Chizhikov V.E."/>
            <person name="Gytorov V.V."/>
            <person name="Gashikov P.V."/>
            <person name="Belanov E.F."/>
            <person name="Belavin P.A."/>
            <person name="Resenchuk S.M."/>
            <person name="Andzhaparidze O.G."/>
            <person name="Sandakhchiev L.S."/>
        </authorList>
    </citation>
    <scope>NUCLEOTIDE SEQUENCE [GENOMIC DNA]</scope>
</reference>
<reference key="2">
    <citation type="journal article" date="1993" name="FEBS Lett.">
        <title>Genes of variola and vaccinia viruses necessary to overcome the host protective mechanisms.</title>
        <authorList>
            <person name="Shchelkunov S.N."/>
            <person name="Blinov V.M."/>
            <person name="Sandakhchiev L.S."/>
        </authorList>
    </citation>
    <scope>NUCLEOTIDE SEQUENCE [LARGE SCALE GENOMIC DNA]</scope>
</reference>
<proteinExistence type="inferred from homology"/>
<gene>
    <name type="ORF">D1R</name>
    <name type="ORF">F1R</name>
</gene>
<name>MCEL_VAR67</name>
<organismHost>
    <name type="scientific">Homo sapiens</name>
    <name type="common">Human</name>
    <dbReference type="NCBI Taxonomy" id="9606"/>
</organismHost>
<accession>P0DSX5</accession>
<accession>P33057</accession>
<accession>Q9QNI8</accession>
<protein>
    <recommendedName>
        <fullName>mRNA-capping enzyme catalytic subunit</fullName>
    </recommendedName>
    <alternativeName>
        <fullName>Virus termination factor large subunit</fullName>
        <shortName>VTF large subunit</shortName>
    </alternativeName>
    <alternativeName>
        <fullName>mRNA-capping enzyme 97 kDa subunit</fullName>
    </alternativeName>
    <alternativeName>
        <fullName>mRNA-capping enzyme D1 subunit</fullName>
    </alternativeName>
    <alternativeName>
        <fullName>mRNA-capping enzyme large subunit</fullName>
    </alternativeName>
    <domain>
        <recommendedName>
            <fullName>Polynucleotide 5'-triphosphatase</fullName>
            <ecNumber>3.6.1.74</ecNumber>
        </recommendedName>
        <alternativeName>
            <fullName>mRNA 5'-triphosphatase</fullName>
            <shortName>TPase</shortName>
        </alternativeName>
    </domain>
    <domain>
        <recommendedName>
            <fullName>mRNA guanylyltransferase</fullName>
            <ecNumber>2.7.7.50</ecNumber>
        </recommendedName>
        <alternativeName>
            <fullName>GTP--RNA guanylyltransferase</fullName>
            <shortName>GTase</shortName>
        </alternativeName>
    </domain>
    <domain>
        <recommendedName>
            <fullName>mRNA (guanine-N(7))-methyltransferase</fullName>
            <ecNumber>2.1.1.56</ecNumber>
        </recommendedName>
        <alternativeName>
            <fullName>mRNA cap methyltransferase</fullName>
        </alternativeName>
    </domain>
</protein>
<dbReference type="EC" id="3.6.1.74"/>
<dbReference type="EC" id="2.7.7.50"/>
<dbReference type="EC" id="2.1.1.56"/>
<dbReference type="EMBL" id="X67119">
    <property type="protein sequence ID" value="CAA47590.1"/>
    <property type="molecule type" value="Genomic_DNA"/>
</dbReference>
<dbReference type="EMBL" id="X69198">
    <property type="protein sequence ID" value="CAA49032.1"/>
    <property type="molecule type" value="Genomic_DNA"/>
</dbReference>
<dbReference type="PIR" id="G36846">
    <property type="entry name" value="G36846"/>
</dbReference>
<dbReference type="RefSeq" id="NP_042135.1">
    <property type="nucleotide sequence ID" value="NC_001611.1"/>
</dbReference>
<dbReference type="SMR" id="P0DSX5"/>
<dbReference type="GeneID" id="1486417"/>
<dbReference type="KEGG" id="vg:1486417"/>
<dbReference type="Proteomes" id="UP000002060">
    <property type="component" value="Segment"/>
</dbReference>
<dbReference type="GO" id="GO:0044423">
    <property type="term" value="C:virion component"/>
    <property type="evidence" value="ECO:0007669"/>
    <property type="project" value="UniProtKB-KW"/>
</dbReference>
<dbReference type="GO" id="GO:0050355">
    <property type="term" value="F:inorganic triphosphate phosphatase activity"/>
    <property type="evidence" value="ECO:0007669"/>
    <property type="project" value="InterPro"/>
</dbReference>
<dbReference type="GO" id="GO:0046872">
    <property type="term" value="F:metal ion binding"/>
    <property type="evidence" value="ECO:0007669"/>
    <property type="project" value="UniProtKB-KW"/>
</dbReference>
<dbReference type="GO" id="GO:0004482">
    <property type="term" value="F:mRNA 5'-cap (guanine-N7-)-methyltransferase activity"/>
    <property type="evidence" value="ECO:0007669"/>
    <property type="project" value="UniProtKB-EC"/>
</dbReference>
<dbReference type="GO" id="GO:0140818">
    <property type="term" value="F:mRNA 5'-triphosphate monophosphatase activity"/>
    <property type="evidence" value="ECO:0007669"/>
    <property type="project" value="RHEA"/>
</dbReference>
<dbReference type="GO" id="GO:0004484">
    <property type="term" value="F:mRNA guanylyltransferase activity"/>
    <property type="evidence" value="ECO:0007669"/>
    <property type="project" value="UniProtKB-EC"/>
</dbReference>
<dbReference type="GO" id="GO:0004651">
    <property type="term" value="F:polynucleotide 5'-phosphatase activity"/>
    <property type="evidence" value="ECO:0007669"/>
    <property type="project" value="UniProtKB-EC"/>
</dbReference>
<dbReference type="GO" id="GO:0003723">
    <property type="term" value="F:RNA binding"/>
    <property type="evidence" value="ECO:0007669"/>
    <property type="project" value="UniProtKB-KW"/>
</dbReference>
<dbReference type="FunFam" id="3.30.470.140:FF:000001">
    <property type="entry name" value="mRNA-capping enzyme catalytic subunit"/>
    <property type="match status" value="1"/>
</dbReference>
<dbReference type="FunFam" id="3.40.50.150:FF:000307">
    <property type="entry name" value="mRNA-capping enzyme catalytic subunit"/>
    <property type="match status" value="1"/>
</dbReference>
<dbReference type="Gene3D" id="2.40.50.830">
    <property type="match status" value="1"/>
</dbReference>
<dbReference type="Gene3D" id="3.20.100.20">
    <property type="match status" value="1"/>
</dbReference>
<dbReference type="Gene3D" id="3.30.470.140">
    <property type="match status" value="1"/>
</dbReference>
<dbReference type="Gene3D" id="3.40.50.150">
    <property type="entry name" value="Vaccinia Virus protein VP39"/>
    <property type="match status" value="1"/>
</dbReference>
<dbReference type="InterPro" id="IPR048425">
    <property type="entry name" value="MCEL_GT_NTPase"/>
</dbReference>
<dbReference type="InterPro" id="IPR048426">
    <property type="entry name" value="MCEL_GT_OB"/>
</dbReference>
<dbReference type="InterPro" id="IPR046429">
    <property type="entry name" value="MCEL_NTPase_sf"/>
</dbReference>
<dbReference type="InterPro" id="IPR046428">
    <property type="entry name" value="MCEL_OB_dom_sf"/>
</dbReference>
<dbReference type="InterPro" id="IPR019602">
    <property type="entry name" value="MCEL_TPase"/>
</dbReference>
<dbReference type="InterPro" id="IPR046430">
    <property type="entry name" value="MCEL_TPase_sf"/>
</dbReference>
<dbReference type="InterPro" id="IPR004971">
    <property type="entry name" value="mRNA_G-N7_MeTrfase_dom"/>
</dbReference>
<dbReference type="InterPro" id="IPR039753">
    <property type="entry name" value="RG7MT1"/>
</dbReference>
<dbReference type="InterPro" id="IPR029063">
    <property type="entry name" value="SAM-dependent_MTases_sf"/>
</dbReference>
<dbReference type="PANTHER" id="PTHR12189:SF2">
    <property type="entry name" value="MRNA CAP GUANINE-N7 METHYLTRANSFERASE"/>
    <property type="match status" value="1"/>
</dbReference>
<dbReference type="PANTHER" id="PTHR12189">
    <property type="entry name" value="MRNA GUANINE-7- METHYLTRANSFERASE"/>
    <property type="match status" value="1"/>
</dbReference>
<dbReference type="Pfam" id="PF21004">
    <property type="entry name" value="MCEL_GT_NTPase"/>
    <property type="match status" value="1"/>
</dbReference>
<dbReference type="Pfam" id="PF21005">
    <property type="entry name" value="MCEL_GT_OB"/>
    <property type="match status" value="1"/>
</dbReference>
<dbReference type="Pfam" id="PF10640">
    <property type="entry name" value="MCEL_TPase"/>
    <property type="match status" value="1"/>
</dbReference>
<dbReference type="Pfam" id="PF03291">
    <property type="entry name" value="mRNA_G-N7_MeTrfase"/>
    <property type="match status" value="1"/>
</dbReference>
<dbReference type="SUPFAM" id="SSF53335">
    <property type="entry name" value="S-adenosyl-L-methionine-dependent methyltransferases"/>
    <property type="match status" value="1"/>
</dbReference>
<dbReference type="PROSITE" id="PS51562">
    <property type="entry name" value="RNA_CAP0_MT"/>
    <property type="match status" value="1"/>
</dbReference>
<sequence>MDANVVSSSTIATYIDALAKNASELEQGSTAYEINNELELVFIKPPLITLTNVVNISTIQESFIRFTVTNKEGVKIRTKIPLSKVHGLDVKNVQLVDAIDNIVWEKKSLVTENRLHKACLLRLSTEERHIFLDYKKYGSSIRLELVNLIQAKTKNFTIDFKLKYFLGSGAQSKSSLLHAINHPKSRPNTSLEIEFTPRDNETVPYDELIKELTTFSRHIFMASPENVILSPPINAPIKTFMLPKQDIVGMDLENLYAVTKTDGIPITIRVTSKGLYCYFTHLGYIIRYPVKRIIDSEVVVFGEAVKDKNWTVYLIKLIEPVNAISDRLEESKYVESKLVDICDRIVFKSKKYEGPFTTTSEVVDMLSTYLPKQPEGVILFYSKGPKSNIDFKIKKENTIDQTVNVVFRYMSSEPIIFGESSIFIEYKKFTNDKGFPKEYGSGKIVLYNGVNYLNNIYCLEYINTHNEVGIKSVVVPIKFIAEFLVNGEILKPRIDKTMKYINSEDYYGNQHNVIVEHLRDQSIKIGDVFNEDKLSDVGHQYANNDKFRLNPEVSYFTNKRTRGPLGILSNYVKTLLISMYCSKTFLDDSNKRKVLAIDFENGADLEKYFYGEIALLVATDPDADAIARGNERYNKLNSGIKTKYYKFDYIQETIRSNTFVSSVREVFYFGKFNIIDWQFAIHYSFHPRHYATIMNNLSELTASGGKVLITTMDGDKLSKLTDKKTFIIHKNLPSSENYMSVEKIADDRIVVYNPSTMSTPMTEYIIKKNDIVRVFNEYGFVLVDNVDFATIIERSKKFINGASTMEDRPSTRNFFELNRGAIKCEGLDVEDLLSYYVVYVFSKR</sequence>
<comment type="function">
    <text evidence="1">Catalytic subunit of the mRNA capping enzyme which catalyzes three enzymatic reactions: the 5' triphosphate end of the pre-mRNA is hydrolyzed to a diphosphate by RNA 5' triphosphatase; the diphosphate RNA end is capped with GMP by RNA guanylyltransferase and the GpppN cap is methylated by RNA (guanine-N7) methyltransferase. Heterodimeric mRNA capping enzyme catalyzes the linkage of a N7-methyl-guanosine moiety to the first transcribed nucleotide (cap 0 structure), whereas the polymerase associated VP39 is responsible for a second methylation at the 2'-O position of the ribose (cap 1 structure) (By similarity).</text>
</comment>
<comment type="function">
    <text evidence="1">The heterodimeric enzyme is also involved in early viral gene transcription termination and intermediate viral gene transcription initiation. Early gene transcription termination requires the termination factor VTF, the DNA-dependent ATPase NPH-I and the Rap94 subunit of the viral RNA polymerase, as well as the presence of a specific termination motif. Binds, together with RAP94, to the termination motif 5'-UUUUUNU-3' in the nascent early mRNA (By similarity).</text>
</comment>
<comment type="catalytic activity">
    <reaction evidence="2">
        <text>a 5'-end triphospho-ribonucleoside in mRNA + H2O = a 5'-end diphospho-ribonucleoside in mRNA + phosphate + H(+)</text>
        <dbReference type="Rhea" id="RHEA:67004"/>
        <dbReference type="Rhea" id="RHEA-COMP:17164"/>
        <dbReference type="Rhea" id="RHEA-COMP:17165"/>
        <dbReference type="ChEBI" id="CHEBI:15377"/>
        <dbReference type="ChEBI" id="CHEBI:15378"/>
        <dbReference type="ChEBI" id="CHEBI:43474"/>
        <dbReference type="ChEBI" id="CHEBI:167616"/>
        <dbReference type="ChEBI" id="CHEBI:167618"/>
        <dbReference type="EC" id="3.6.1.74"/>
    </reaction>
    <physiologicalReaction direction="left-to-right" evidence="2">
        <dbReference type="Rhea" id="RHEA:67005"/>
    </physiologicalReaction>
</comment>
<comment type="catalytic activity">
    <reaction>
        <text>a 5'-end diphospho-ribonucleoside in mRNA + GTP + H(+) = a 5'-end (5'-triphosphoguanosine)-ribonucleoside in mRNA + diphosphate</text>
        <dbReference type="Rhea" id="RHEA:67012"/>
        <dbReference type="Rhea" id="RHEA-COMP:17165"/>
        <dbReference type="Rhea" id="RHEA-COMP:17166"/>
        <dbReference type="ChEBI" id="CHEBI:15378"/>
        <dbReference type="ChEBI" id="CHEBI:33019"/>
        <dbReference type="ChEBI" id="CHEBI:37565"/>
        <dbReference type="ChEBI" id="CHEBI:167616"/>
        <dbReference type="ChEBI" id="CHEBI:167617"/>
        <dbReference type="EC" id="2.7.7.50"/>
    </reaction>
</comment>
<comment type="catalytic activity">
    <reaction evidence="3">
        <text>a 5'-end (5'-triphosphoguanosine)-ribonucleoside in mRNA + S-adenosyl-L-methionine = a 5'-end (N(7)-methyl 5'-triphosphoguanosine)-ribonucleoside in mRNA + S-adenosyl-L-homocysteine</text>
        <dbReference type="Rhea" id="RHEA:67008"/>
        <dbReference type="Rhea" id="RHEA-COMP:17166"/>
        <dbReference type="Rhea" id="RHEA-COMP:17167"/>
        <dbReference type="ChEBI" id="CHEBI:57856"/>
        <dbReference type="ChEBI" id="CHEBI:59789"/>
        <dbReference type="ChEBI" id="CHEBI:156461"/>
        <dbReference type="ChEBI" id="CHEBI:167617"/>
        <dbReference type="EC" id="2.1.1.56"/>
    </reaction>
</comment>
<comment type="cofactor">
    <cofactor evidence="2">
        <name>Mg(2+)</name>
        <dbReference type="ChEBI" id="CHEBI:18420"/>
    </cofactor>
</comment>
<comment type="subunit">
    <text evidence="1">Heterodimer of a catalytic and a regulatory subunit. Intrinsic methyltransferase activity of the catalytic subunit is weak and needs to be stimulated 30- to 50-fold by the regulatory subunit, which is itself catalytically inert (By similarity).</text>
</comment>
<comment type="subcellular location">
    <subcellularLocation>
        <location evidence="4">Virion</location>
    </subcellularLocation>
    <text>All the enzymes and other proteins required to synthesize early mRNAs are packaged within the virion core along with the DNA genome.</text>
</comment>
<comment type="domain">
    <text evidence="1">The N-terminus contains the triphosphatase and guanylyltransferase domains, whereas the C-terminus contains the methyltransferase domain. The N-terminus is involved in binding to the termination motif 5'-UUUUUNU-3' in the nascent mRNA (By similarity).</text>
</comment>
<comment type="similarity">
    <text evidence="4">In the N-terminal section; belongs to the dsDNA virus mRNA guanylyltransferase family.</text>
</comment>
<comment type="similarity">
    <text evidence="3">In the C-terminal section; belongs to the class I-like SAM-binding methyltransferase superfamily. mRNA cap 0 methyltransferase family.</text>
</comment>
<keyword id="KW-0378">Hydrolase</keyword>
<keyword id="KW-0460">Magnesium</keyword>
<keyword id="KW-0479">Metal-binding</keyword>
<keyword id="KW-0489">Methyltransferase</keyword>
<keyword id="KW-0506">mRNA capping</keyword>
<keyword id="KW-0507">mRNA processing</keyword>
<keyword id="KW-0511">Multifunctional enzyme</keyword>
<keyword id="KW-0548">Nucleotidyltransferase</keyword>
<keyword id="KW-1185">Reference proteome</keyword>
<keyword id="KW-0694">RNA-binding</keyword>
<keyword id="KW-0949">S-adenosyl-L-methionine</keyword>
<keyword id="KW-0808">Transferase</keyword>
<keyword id="KW-0946">Virion</keyword>